<gene>
    <name evidence="1" type="primary">grpE</name>
    <name type="ordered locus">SO_1524</name>
</gene>
<name>GRPE_SHEON</name>
<protein>
    <recommendedName>
        <fullName evidence="1">Protein GrpE</fullName>
    </recommendedName>
    <alternativeName>
        <fullName evidence="1">HSP-70 cofactor</fullName>
    </alternativeName>
</protein>
<keyword id="KW-0143">Chaperone</keyword>
<keyword id="KW-0963">Cytoplasm</keyword>
<keyword id="KW-1185">Reference proteome</keyword>
<keyword id="KW-0346">Stress response</keyword>
<sequence>MSNESIKAEQDLIHEGVESEVSTEEASLIDELTQANFRIEELEQLLADALAKVDEQKDSVIRAAAEVDNIRRRAAMDVEKANKFALEKFANELLPVLDNMERALQGTNPQDETTKAIYEGVELTQKSLLTAVAKFGVKQIDPQGQAFNPDQHQAIGMQPSAEFPTNTVMLVMQKGYELNSRLLRPAMVMVSQGGPSQESASIDIEA</sequence>
<accession>Q8EGS0</accession>
<evidence type="ECO:0000255" key="1">
    <source>
        <dbReference type="HAMAP-Rule" id="MF_01151"/>
    </source>
</evidence>
<evidence type="ECO:0000256" key="2">
    <source>
        <dbReference type="SAM" id="MobiDB-lite"/>
    </source>
</evidence>
<dbReference type="EMBL" id="AE014299">
    <property type="protein sequence ID" value="AAN54585.1"/>
    <property type="molecule type" value="Genomic_DNA"/>
</dbReference>
<dbReference type="RefSeq" id="NP_717141.1">
    <property type="nucleotide sequence ID" value="NC_004347.2"/>
</dbReference>
<dbReference type="RefSeq" id="WP_011071703.1">
    <property type="nucleotide sequence ID" value="NC_004347.2"/>
</dbReference>
<dbReference type="SMR" id="Q8EGS0"/>
<dbReference type="STRING" id="211586.SO_1524"/>
<dbReference type="PaxDb" id="211586-SO_1524"/>
<dbReference type="KEGG" id="son:SO_1524"/>
<dbReference type="PATRIC" id="fig|1028802.3.peg.931"/>
<dbReference type="eggNOG" id="COG0576">
    <property type="taxonomic scope" value="Bacteria"/>
</dbReference>
<dbReference type="HOGENOM" id="CLU_057217_6_0_6"/>
<dbReference type="OrthoDB" id="9789811at2"/>
<dbReference type="PhylomeDB" id="Q8EGS0"/>
<dbReference type="BioCyc" id="SONE211586:G1GMP-1408-MONOMER"/>
<dbReference type="Proteomes" id="UP000008186">
    <property type="component" value="Chromosome"/>
</dbReference>
<dbReference type="GO" id="GO:0005829">
    <property type="term" value="C:cytosol"/>
    <property type="evidence" value="ECO:0000318"/>
    <property type="project" value="GO_Central"/>
</dbReference>
<dbReference type="GO" id="GO:0000774">
    <property type="term" value="F:adenyl-nucleotide exchange factor activity"/>
    <property type="evidence" value="ECO:0000318"/>
    <property type="project" value="GO_Central"/>
</dbReference>
<dbReference type="GO" id="GO:0042803">
    <property type="term" value="F:protein homodimerization activity"/>
    <property type="evidence" value="ECO:0007669"/>
    <property type="project" value="InterPro"/>
</dbReference>
<dbReference type="GO" id="GO:0051087">
    <property type="term" value="F:protein-folding chaperone binding"/>
    <property type="evidence" value="ECO:0007669"/>
    <property type="project" value="InterPro"/>
</dbReference>
<dbReference type="GO" id="GO:0051082">
    <property type="term" value="F:unfolded protein binding"/>
    <property type="evidence" value="ECO:0000318"/>
    <property type="project" value="GO_Central"/>
</dbReference>
<dbReference type="GO" id="GO:0006457">
    <property type="term" value="P:protein folding"/>
    <property type="evidence" value="ECO:0007669"/>
    <property type="project" value="InterPro"/>
</dbReference>
<dbReference type="CDD" id="cd00446">
    <property type="entry name" value="GrpE"/>
    <property type="match status" value="1"/>
</dbReference>
<dbReference type="FunFam" id="2.30.22.10:FF:000001">
    <property type="entry name" value="Protein GrpE"/>
    <property type="match status" value="1"/>
</dbReference>
<dbReference type="Gene3D" id="3.90.20.20">
    <property type="match status" value="1"/>
</dbReference>
<dbReference type="Gene3D" id="2.30.22.10">
    <property type="entry name" value="Head domain of nucleotide exchange factor GrpE"/>
    <property type="match status" value="1"/>
</dbReference>
<dbReference type="HAMAP" id="MF_01151">
    <property type="entry name" value="GrpE"/>
    <property type="match status" value="1"/>
</dbReference>
<dbReference type="InterPro" id="IPR000740">
    <property type="entry name" value="GrpE"/>
</dbReference>
<dbReference type="InterPro" id="IPR013805">
    <property type="entry name" value="GrpE_coiled_coil"/>
</dbReference>
<dbReference type="InterPro" id="IPR009012">
    <property type="entry name" value="GrpE_head"/>
</dbReference>
<dbReference type="NCBIfam" id="NF010737">
    <property type="entry name" value="PRK14139.1"/>
    <property type="match status" value="1"/>
</dbReference>
<dbReference type="NCBIfam" id="NF010738">
    <property type="entry name" value="PRK14140.1"/>
    <property type="match status" value="1"/>
</dbReference>
<dbReference type="NCBIfam" id="NF010748">
    <property type="entry name" value="PRK14150.1"/>
    <property type="match status" value="1"/>
</dbReference>
<dbReference type="PANTHER" id="PTHR21237">
    <property type="entry name" value="GRPE PROTEIN"/>
    <property type="match status" value="1"/>
</dbReference>
<dbReference type="PANTHER" id="PTHR21237:SF23">
    <property type="entry name" value="GRPE PROTEIN HOMOLOG, MITOCHONDRIAL"/>
    <property type="match status" value="1"/>
</dbReference>
<dbReference type="Pfam" id="PF01025">
    <property type="entry name" value="GrpE"/>
    <property type="match status" value="1"/>
</dbReference>
<dbReference type="PRINTS" id="PR00773">
    <property type="entry name" value="GRPEPROTEIN"/>
</dbReference>
<dbReference type="SUPFAM" id="SSF58014">
    <property type="entry name" value="Coiled-coil domain of nucleotide exchange factor GrpE"/>
    <property type="match status" value="1"/>
</dbReference>
<dbReference type="SUPFAM" id="SSF51064">
    <property type="entry name" value="Head domain of nucleotide exchange factor GrpE"/>
    <property type="match status" value="1"/>
</dbReference>
<dbReference type="PROSITE" id="PS01071">
    <property type="entry name" value="GRPE"/>
    <property type="match status" value="1"/>
</dbReference>
<reference key="1">
    <citation type="journal article" date="2002" name="Nat. Biotechnol.">
        <title>Genome sequence of the dissimilatory metal ion-reducing bacterium Shewanella oneidensis.</title>
        <authorList>
            <person name="Heidelberg J.F."/>
            <person name="Paulsen I.T."/>
            <person name="Nelson K.E."/>
            <person name="Gaidos E.J."/>
            <person name="Nelson W.C."/>
            <person name="Read T.D."/>
            <person name="Eisen J.A."/>
            <person name="Seshadri R."/>
            <person name="Ward N.L."/>
            <person name="Methe B.A."/>
            <person name="Clayton R.A."/>
            <person name="Meyer T."/>
            <person name="Tsapin A."/>
            <person name="Scott J."/>
            <person name="Beanan M.J."/>
            <person name="Brinkac L.M."/>
            <person name="Daugherty S.C."/>
            <person name="DeBoy R.T."/>
            <person name="Dodson R.J."/>
            <person name="Durkin A.S."/>
            <person name="Haft D.H."/>
            <person name="Kolonay J.F."/>
            <person name="Madupu R."/>
            <person name="Peterson J.D."/>
            <person name="Umayam L.A."/>
            <person name="White O."/>
            <person name="Wolf A.M."/>
            <person name="Vamathevan J.J."/>
            <person name="Weidman J.F."/>
            <person name="Impraim M."/>
            <person name="Lee K."/>
            <person name="Berry K.J."/>
            <person name="Lee C."/>
            <person name="Mueller J."/>
            <person name="Khouri H.M."/>
            <person name="Gill J."/>
            <person name="Utterback T.R."/>
            <person name="McDonald L.A."/>
            <person name="Feldblyum T.V."/>
            <person name="Smith H.O."/>
            <person name="Venter J.C."/>
            <person name="Nealson K.H."/>
            <person name="Fraser C.M."/>
        </authorList>
    </citation>
    <scope>NUCLEOTIDE SEQUENCE [LARGE SCALE GENOMIC DNA]</scope>
    <source>
        <strain>ATCC 700550 / JCM 31522 / CIP 106686 / LMG 19005 / NCIMB 14063 / MR-1</strain>
    </source>
</reference>
<comment type="function">
    <text evidence="1">Participates actively in the response to hyperosmotic and heat shock by preventing the aggregation of stress-denatured proteins, in association with DnaK and GrpE. It is the nucleotide exchange factor for DnaK and may function as a thermosensor. Unfolded proteins bind initially to DnaJ; upon interaction with the DnaJ-bound protein, DnaK hydrolyzes its bound ATP, resulting in the formation of a stable complex. GrpE releases ADP from DnaK; ATP binding to DnaK triggers the release of the substrate protein, thus completing the reaction cycle. Several rounds of ATP-dependent interactions between DnaJ, DnaK and GrpE are required for fully efficient folding.</text>
</comment>
<comment type="subunit">
    <text evidence="1">Homodimer.</text>
</comment>
<comment type="subcellular location">
    <subcellularLocation>
        <location evidence="1">Cytoplasm</location>
    </subcellularLocation>
</comment>
<comment type="similarity">
    <text evidence="1">Belongs to the GrpE family.</text>
</comment>
<proteinExistence type="inferred from homology"/>
<organism>
    <name type="scientific">Shewanella oneidensis (strain ATCC 700550 / JCM 31522 / CIP 106686 / LMG 19005 / NCIMB 14063 / MR-1)</name>
    <dbReference type="NCBI Taxonomy" id="211586"/>
    <lineage>
        <taxon>Bacteria</taxon>
        <taxon>Pseudomonadati</taxon>
        <taxon>Pseudomonadota</taxon>
        <taxon>Gammaproteobacteria</taxon>
        <taxon>Alteromonadales</taxon>
        <taxon>Shewanellaceae</taxon>
        <taxon>Shewanella</taxon>
    </lineage>
</organism>
<feature type="chain" id="PRO_0000113852" description="Protein GrpE">
    <location>
        <begin position="1"/>
        <end position="206"/>
    </location>
</feature>
<feature type="region of interest" description="Disordered" evidence="2">
    <location>
        <begin position="1"/>
        <end position="20"/>
    </location>
</feature>
<feature type="compositionally biased region" description="Basic and acidic residues" evidence="2">
    <location>
        <begin position="1"/>
        <end position="17"/>
    </location>
</feature>